<dbReference type="EC" id="2.3.1.8"/>
<dbReference type="EMBL" id="BA000017">
    <property type="protein sequence ID" value="BAB56750.1"/>
    <property type="molecule type" value="Genomic_DNA"/>
</dbReference>
<dbReference type="RefSeq" id="WP_000774281.1">
    <property type="nucleotide sequence ID" value="NC_002758.2"/>
</dbReference>
<dbReference type="SMR" id="P65862"/>
<dbReference type="KEGG" id="sav:SAV0588"/>
<dbReference type="HOGENOM" id="CLU_019723_0_1_9"/>
<dbReference type="PhylomeDB" id="P65862"/>
<dbReference type="UniPathway" id="UPA00340">
    <property type="reaction ID" value="UER00459"/>
</dbReference>
<dbReference type="Proteomes" id="UP000002481">
    <property type="component" value="Chromosome"/>
</dbReference>
<dbReference type="GO" id="GO:0005737">
    <property type="term" value="C:cytoplasm"/>
    <property type="evidence" value="ECO:0007669"/>
    <property type="project" value="UniProtKB-SubCell"/>
</dbReference>
<dbReference type="GO" id="GO:0008959">
    <property type="term" value="F:phosphate acetyltransferase activity"/>
    <property type="evidence" value="ECO:0007669"/>
    <property type="project" value="UniProtKB-EC"/>
</dbReference>
<dbReference type="GO" id="GO:0006085">
    <property type="term" value="P:acetyl-CoA biosynthetic process"/>
    <property type="evidence" value="ECO:0007669"/>
    <property type="project" value="UniProtKB-UniPathway"/>
</dbReference>
<dbReference type="Gene3D" id="3.40.50.10950">
    <property type="match status" value="1"/>
</dbReference>
<dbReference type="Gene3D" id="3.40.50.10750">
    <property type="entry name" value="Isocitrate/Isopropylmalate dehydrogenase-like"/>
    <property type="match status" value="1"/>
</dbReference>
<dbReference type="InterPro" id="IPR012147">
    <property type="entry name" value="P_Ac_Bu_trans"/>
</dbReference>
<dbReference type="InterPro" id="IPR004614">
    <property type="entry name" value="P_AcTrfase"/>
</dbReference>
<dbReference type="InterPro" id="IPR042113">
    <property type="entry name" value="P_AcTrfase_dom1"/>
</dbReference>
<dbReference type="InterPro" id="IPR042112">
    <property type="entry name" value="P_AcTrfase_dom2"/>
</dbReference>
<dbReference type="InterPro" id="IPR050500">
    <property type="entry name" value="Phos_Acetyltrans/Butyryltrans"/>
</dbReference>
<dbReference type="InterPro" id="IPR002505">
    <property type="entry name" value="PTA_PTB"/>
</dbReference>
<dbReference type="NCBIfam" id="NF007233">
    <property type="entry name" value="PRK09653.1"/>
    <property type="match status" value="1"/>
</dbReference>
<dbReference type="NCBIfam" id="TIGR00651">
    <property type="entry name" value="pta"/>
    <property type="match status" value="1"/>
</dbReference>
<dbReference type="PANTHER" id="PTHR43356">
    <property type="entry name" value="PHOSPHATE ACETYLTRANSFERASE"/>
    <property type="match status" value="1"/>
</dbReference>
<dbReference type="PANTHER" id="PTHR43356:SF3">
    <property type="entry name" value="PHOSPHATE ACETYLTRANSFERASE"/>
    <property type="match status" value="1"/>
</dbReference>
<dbReference type="Pfam" id="PF01515">
    <property type="entry name" value="PTA_PTB"/>
    <property type="match status" value="1"/>
</dbReference>
<dbReference type="PIRSF" id="PIRSF000428">
    <property type="entry name" value="P_Ac_trans"/>
    <property type="match status" value="1"/>
</dbReference>
<dbReference type="SUPFAM" id="SSF53659">
    <property type="entry name" value="Isocitrate/Isopropylmalate dehydrogenase-like"/>
    <property type="match status" value="1"/>
</dbReference>
<comment type="catalytic activity">
    <reaction>
        <text>acetyl-CoA + phosphate = acetyl phosphate + CoA</text>
        <dbReference type="Rhea" id="RHEA:19521"/>
        <dbReference type="ChEBI" id="CHEBI:22191"/>
        <dbReference type="ChEBI" id="CHEBI:43474"/>
        <dbReference type="ChEBI" id="CHEBI:57287"/>
        <dbReference type="ChEBI" id="CHEBI:57288"/>
        <dbReference type="EC" id="2.3.1.8"/>
    </reaction>
</comment>
<comment type="pathway">
    <text>Metabolic intermediate biosynthesis; acetyl-CoA biosynthesis; acetyl-CoA from acetate: step 2/2.</text>
</comment>
<comment type="subcellular location">
    <subcellularLocation>
        <location evidence="1">Cytoplasm</location>
    </subcellularLocation>
</comment>
<comment type="similarity">
    <text evidence="1">Belongs to the phosphate acetyltransferase and butyryltransferase family.</text>
</comment>
<accession>P65862</accession>
<accession>Q99W23</accession>
<protein>
    <recommendedName>
        <fullName>Phosphate acetyltransferase</fullName>
        <ecNumber>2.3.1.8</ecNumber>
    </recommendedName>
    <alternativeName>
        <fullName>Phosphotransacetylase</fullName>
    </alternativeName>
</protein>
<organism>
    <name type="scientific">Staphylococcus aureus (strain Mu50 / ATCC 700699)</name>
    <dbReference type="NCBI Taxonomy" id="158878"/>
    <lineage>
        <taxon>Bacteria</taxon>
        <taxon>Bacillati</taxon>
        <taxon>Bacillota</taxon>
        <taxon>Bacilli</taxon>
        <taxon>Bacillales</taxon>
        <taxon>Staphylococcaceae</taxon>
        <taxon>Staphylococcus</taxon>
    </lineage>
</organism>
<sequence>MADLLNVLKDKLSGKNVKIVLPEGEDERVLTAATQLQATDYVTPIVLGDETKVQSLAQKLDLDISNIELINPATSELKAELVQSFVERRKGKATEEQAQELLNNVNYFGTMLVYAGKADGLVSGAAHSTGDTVRPALQIIKTKPGVSRTSGIFFMIKGDEQYIFGDCAINPELDSQGLAEIAVESAKSALSFGMDPKVAMLSFSTKGSAKSDDVTKVQEAVKLAQQKAEEEKLEAIIDGEFQFDAAIVPGVAEKKAPGAKLQGDANVFVFPSLEAGNIGYKIAQRLGGYDAVGPVLQGLNSPVNDLSRGCSIEDVYNLSIITAAQALQ</sequence>
<feature type="chain" id="PRO_0000179141" description="Phosphate acetyltransferase">
    <location>
        <begin position="1"/>
        <end position="328"/>
    </location>
</feature>
<evidence type="ECO:0000305" key="1"/>
<name>PTAS_STAAM</name>
<keyword id="KW-0012">Acyltransferase</keyword>
<keyword id="KW-0963">Cytoplasm</keyword>
<keyword id="KW-0808">Transferase</keyword>
<reference key="1">
    <citation type="journal article" date="2001" name="Lancet">
        <title>Whole genome sequencing of meticillin-resistant Staphylococcus aureus.</title>
        <authorList>
            <person name="Kuroda M."/>
            <person name="Ohta T."/>
            <person name="Uchiyama I."/>
            <person name="Baba T."/>
            <person name="Yuzawa H."/>
            <person name="Kobayashi I."/>
            <person name="Cui L."/>
            <person name="Oguchi A."/>
            <person name="Aoki K."/>
            <person name="Nagai Y."/>
            <person name="Lian J.-Q."/>
            <person name="Ito T."/>
            <person name="Kanamori M."/>
            <person name="Matsumaru H."/>
            <person name="Maruyama A."/>
            <person name="Murakami H."/>
            <person name="Hosoyama A."/>
            <person name="Mizutani-Ui Y."/>
            <person name="Takahashi N.K."/>
            <person name="Sawano T."/>
            <person name="Inoue R."/>
            <person name="Kaito C."/>
            <person name="Sekimizu K."/>
            <person name="Hirakawa H."/>
            <person name="Kuhara S."/>
            <person name="Goto S."/>
            <person name="Yabuzaki J."/>
            <person name="Kanehisa M."/>
            <person name="Yamashita A."/>
            <person name="Oshima K."/>
            <person name="Furuya K."/>
            <person name="Yoshino C."/>
            <person name="Shiba T."/>
            <person name="Hattori M."/>
            <person name="Ogasawara N."/>
            <person name="Hayashi H."/>
            <person name="Hiramatsu K."/>
        </authorList>
    </citation>
    <scope>NUCLEOTIDE SEQUENCE [LARGE SCALE GENOMIC DNA]</scope>
    <source>
        <strain>Mu50 / ATCC 700699</strain>
    </source>
</reference>
<proteinExistence type="inferred from homology"/>
<gene>
    <name type="primary">pta</name>
    <name type="ordered locus">SAV0588</name>
</gene>